<proteinExistence type="evidence at transcript level"/>
<protein>
    <recommendedName>
        <fullName>Pentatricopeptide repeat-containing protein At5g08510</fullName>
    </recommendedName>
</protein>
<feature type="chain" id="PRO_0000363508" description="Pentatricopeptide repeat-containing protein At5g08510">
    <location>
        <begin position="1"/>
        <end position="511"/>
    </location>
</feature>
<feature type="repeat" description="PPR 1">
    <location>
        <begin position="46"/>
        <end position="80"/>
    </location>
</feature>
<feature type="repeat" description="PPR 2">
    <location>
        <begin position="81"/>
        <end position="115"/>
    </location>
</feature>
<feature type="repeat" description="PPR 3">
    <location>
        <begin position="116"/>
        <end position="146"/>
    </location>
</feature>
<feature type="repeat" description="PPR 4">
    <location>
        <begin position="147"/>
        <end position="181"/>
    </location>
</feature>
<feature type="repeat" description="PPR 5">
    <location>
        <begin position="182"/>
        <end position="213"/>
    </location>
</feature>
<feature type="repeat" description="PPR 6">
    <location>
        <begin position="214"/>
        <end position="248"/>
    </location>
</feature>
<feature type="repeat" description="PPR 7">
    <location>
        <begin position="249"/>
        <end position="279"/>
    </location>
</feature>
<feature type="repeat" description="PPR 8">
    <location>
        <begin position="281"/>
        <end position="315"/>
    </location>
</feature>
<feature type="repeat" description="PPR 9">
    <location>
        <begin position="316"/>
        <end position="346"/>
    </location>
</feature>
<feature type="repeat" description="PPR 10">
    <location>
        <begin position="352"/>
        <end position="382"/>
    </location>
</feature>
<feature type="region of interest" description="Type E motif">
    <location>
        <begin position="387"/>
        <end position="462"/>
    </location>
</feature>
<feature type="region of interest" description="Type E(+) motif">
    <location>
        <begin position="463"/>
        <end position="494"/>
    </location>
</feature>
<feature type="sequence conflict" description="In Ref. 4; BAE98759." evidence="1" ref="4">
    <original>HAHC</original>
    <variation>PPPG</variation>
    <location>
        <begin position="8"/>
        <end position="11"/>
    </location>
</feature>
<dbReference type="EMBL" id="AB006697">
    <property type="protein sequence ID" value="BAB10000.1"/>
    <property type="molecule type" value="Genomic_DNA"/>
</dbReference>
<dbReference type="EMBL" id="CP002688">
    <property type="protein sequence ID" value="AED91313.1"/>
    <property type="molecule type" value="Genomic_DNA"/>
</dbReference>
<dbReference type="EMBL" id="BT015162">
    <property type="protein sequence ID" value="AAT85758.1"/>
    <property type="molecule type" value="mRNA"/>
</dbReference>
<dbReference type="EMBL" id="AK226649">
    <property type="protein sequence ID" value="BAE98759.1"/>
    <property type="molecule type" value="mRNA"/>
</dbReference>
<dbReference type="RefSeq" id="NP_196468.1">
    <property type="nucleotide sequence ID" value="NM_120936.4"/>
</dbReference>
<dbReference type="SMR" id="Q9FNN7"/>
<dbReference type="BioGRID" id="16028">
    <property type="interactions" value="1"/>
</dbReference>
<dbReference type="FunCoup" id="Q9FNN7">
    <property type="interactions" value="741"/>
</dbReference>
<dbReference type="STRING" id="3702.Q9FNN7"/>
<dbReference type="PaxDb" id="3702-AT5G08510.1"/>
<dbReference type="ProteomicsDB" id="249261"/>
<dbReference type="EnsemblPlants" id="AT5G08510.1">
    <property type="protein sequence ID" value="AT5G08510.1"/>
    <property type="gene ID" value="AT5G08510"/>
</dbReference>
<dbReference type="GeneID" id="830750"/>
<dbReference type="Gramene" id="AT5G08510.1">
    <property type="protein sequence ID" value="AT5G08510.1"/>
    <property type="gene ID" value="AT5G08510"/>
</dbReference>
<dbReference type="KEGG" id="ath:AT5G08510"/>
<dbReference type="Araport" id="AT5G08510"/>
<dbReference type="TAIR" id="AT5G08510"/>
<dbReference type="eggNOG" id="KOG4197">
    <property type="taxonomic scope" value="Eukaryota"/>
</dbReference>
<dbReference type="HOGENOM" id="CLU_002706_0_2_1"/>
<dbReference type="InParanoid" id="Q9FNN7"/>
<dbReference type="OMA" id="YKLRMAG"/>
<dbReference type="OrthoDB" id="185373at2759"/>
<dbReference type="PhylomeDB" id="Q9FNN7"/>
<dbReference type="PRO" id="PR:Q9FNN7"/>
<dbReference type="Proteomes" id="UP000006548">
    <property type="component" value="Chromosome 5"/>
</dbReference>
<dbReference type="ExpressionAtlas" id="Q9FNN7">
    <property type="expression patterns" value="baseline and differential"/>
</dbReference>
<dbReference type="GO" id="GO:0003723">
    <property type="term" value="F:RNA binding"/>
    <property type="evidence" value="ECO:0007669"/>
    <property type="project" value="InterPro"/>
</dbReference>
<dbReference type="GO" id="GO:0009451">
    <property type="term" value="P:RNA modification"/>
    <property type="evidence" value="ECO:0007669"/>
    <property type="project" value="InterPro"/>
</dbReference>
<dbReference type="FunFam" id="1.25.40.10:FF:000348">
    <property type="entry name" value="Pentatricopeptide repeat-containing protein chloroplastic"/>
    <property type="match status" value="1"/>
</dbReference>
<dbReference type="FunFam" id="1.25.40.10:FF:000184">
    <property type="entry name" value="Pentatricopeptide repeat-containing protein, chloroplastic"/>
    <property type="match status" value="1"/>
</dbReference>
<dbReference type="Gene3D" id="1.25.40.10">
    <property type="entry name" value="Tetratricopeptide repeat domain"/>
    <property type="match status" value="3"/>
</dbReference>
<dbReference type="InterPro" id="IPR046848">
    <property type="entry name" value="E_motif"/>
</dbReference>
<dbReference type="InterPro" id="IPR046849">
    <property type="entry name" value="Eplus_motif"/>
</dbReference>
<dbReference type="InterPro" id="IPR002885">
    <property type="entry name" value="Pentatricopeptide_rpt"/>
</dbReference>
<dbReference type="InterPro" id="IPR046960">
    <property type="entry name" value="PPR_At4g14850-like_plant"/>
</dbReference>
<dbReference type="InterPro" id="IPR011990">
    <property type="entry name" value="TPR-like_helical_dom_sf"/>
</dbReference>
<dbReference type="NCBIfam" id="TIGR00756">
    <property type="entry name" value="PPR"/>
    <property type="match status" value="3"/>
</dbReference>
<dbReference type="PANTHER" id="PTHR47926">
    <property type="entry name" value="PENTATRICOPEPTIDE REPEAT-CONTAINING PROTEIN"/>
    <property type="match status" value="1"/>
</dbReference>
<dbReference type="PANTHER" id="PTHR47926:SF540">
    <property type="entry name" value="PENTATRICOPEPTIDE REPEAT-CONTAINING PROTEIN"/>
    <property type="match status" value="1"/>
</dbReference>
<dbReference type="Pfam" id="PF20431">
    <property type="entry name" value="E_motif"/>
    <property type="match status" value="1"/>
</dbReference>
<dbReference type="Pfam" id="PF20430">
    <property type="entry name" value="Eplus_motif"/>
    <property type="match status" value="1"/>
</dbReference>
<dbReference type="Pfam" id="PF01535">
    <property type="entry name" value="PPR"/>
    <property type="match status" value="2"/>
</dbReference>
<dbReference type="Pfam" id="PF13041">
    <property type="entry name" value="PPR_2"/>
    <property type="match status" value="2"/>
</dbReference>
<dbReference type="Pfam" id="PF13812">
    <property type="entry name" value="PPR_3"/>
    <property type="match status" value="1"/>
</dbReference>
<dbReference type="SUPFAM" id="SSF48452">
    <property type="entry name" value="TPR-like"/>
    <property type="match status" value="1"/>
</dbReference>
<dbReference type="PROSITE" id="PS51375">
    <property type="entry name" value="PPR"/>
    <property type="match status" value="11"/>
</dbReference>
<evidence type="ECO:0000305" key="1"/>
<organism>
    <name type="scientific">Arabidopsis thaliana</name>
    <name type="common">Mouse-ear cress</name>
    <dbReference type="NCBI Taxonomy" id="3702"/>
    <lineage>
        <taxon>Eukaryota</taxon>
        <taxon>Viridiplantae</taxon>
        <taxon>Streptophyta</taxon>
        <taxon>Embryophyta</taxon>
        <taxon>Tracheophyta</taxon>
        <taxon>Spermatophyta</taxon>
        <taxon>Magnoliopsida</taxon>
        <taxon>eudicotyledons</taxon>
        <taxon>Gunneridae</taxon>
        <taxon>Pentapetalae</taxon>
        <taxon>rosids</taxon>
        <taxon>malvids</taxon>
        <taxon>Brassicales</taxon>
        <taxon>Brassicaceae</taxon>
        <taxon>Camelineae</taxon>
        <taxon>Arabidopsis</taxon>
    </lineage>
</organism>
<name>PP371_ARATH</name>
<keyword id="KW-1185">Reference proteome</keyword>
<keyword id="KW-0677">Repeat</keyword>
<sequence length="511" mass="58038">MNGIKQLHAHCLRTGVDETKDLLQRLLLIPNLVYARKLFDHHQNSCTFLYNKLIQAYYVHHQPHESIVLYNLLSFDGLRPSHHTFNFIFAASASFSSARPLRLLHSQFFRSGFESDSFCCTTLITAYAKLGALCCARRVFDEMSKRDVPVWNAMITGYQRRGDMKAAMELFDSMPRKNVTSWTTVISGFSQNGNYSEALKMFLCMEKDKSVKPNHITVVSVLPACANLGELEIGRRLEGYARENGFFDNIYVCNATIEMYSKCGMIDVAKRLFEELGNQRNLCSWNSMIGSLATHGKHDEALTLFAQMLREGEKPDAVTFVGLLLACVHGGMVVKGQELFKSMEEVHKISPKLEHYGCMIDLLGRVGKLQEAYDLIKTMPMKPDAVVWGTLLGACSFHGNVEIAEIASEALFKLEPTNPGNCVIMSNIYAANEKWDGVLRMRKLMKKETMTKAAGYSYFVEVGVDVHKFTVEDKSHPRSYEIYQVLEEIFRRMKLEKSRFDSLLQPEQLCI</sequence>
<accession>Q9FNN7</accession>
<accession>Q0WVT9</accession>
<reference key="1">
    <citation type="journal article" date="1997" name="DNA Res.">
        <title>Structural analysis of Arabidopsis thaliana chromosome 5. II. Sequence features of the regions of 1,044,062 bp covered by thirteen physically assigned P1 clones.</title>
        <authorList>
            <person name="Kotani H."/>
            <person name="Nakamura Y."/>
            <person name="Sato S."/>
            <person name="Kaneko T."/>
            <person name="Asamizu E."/>
            <person name="Miyajima N."/>
            <person name="Tabata S."/>
        </authorList>
    </citation>
    <scope>NUCLEOTIDE SEQUENCE [LARGE SCALE GENOMIC DNA]</scope>
    <source>
        <strain>cv. Columbia</strain>
    </source>
</reference>
<reference key="2">
    <citation type="journal article" date="2017" name="Plant J.">
        <title>Araport11: a complete reannotation of the Arabidopsis thaliana reference genome.</title>
        <authorList>
            <person name="Cheng C.Y."/>
            <person name="Krishnakumar V."/>
            <person name="Chan A.P."/>
            <person name="Thibaud-Nissen F."/>
            <person name="Schobel S."/>
            <person name="Town C.D."/>
        </authorList>
    </citation>
    <scope>GENOME REANNOTATION</scope>
    <source>
        <strain>cv. Columbia</strain>
    </source>
</reference>
<reference key="3">
    <citation type="submission" date="2004-08" db="EMBL/GenBank/DDBJ databases">
        <title>Arabidopsis ORF clones.</title>
        <authorList>
            <person name="Cheuk R.F."/>
            <person name="Chen H."/>
            <person name="Kim C.J."/>
            <person name="Shinn P."/>
            <person name="Ecker J.R."/>
        </authorList>
    </citation>
    <scope>NUCLEOTIDE SEQUENCE [LARGE SCALE MRNA]</scope>
    <source>
        <strain>cv. Columbia</strain>
    </source>
</reference>
<reference key="4">
    <citation type="submission" date="2006-07" db="EMBL/GenBank/DDBJ databases">
        <title>Large-scale analysis of RIKEN Arabidopsis full-length (RAFL) cDNAs.</title>
        <authorList>
            <person name="Totoki Y."/>
            <person name="Seki M."/>
            <person name="Ishida J."/>
            <person name="Nakajima M."/>
            <person name="Enju A."/>
            <person name="Kamiya A."/>
            <person name="Narusaka M."/>
            <person name="Shin-i T."/>
            <person name="Nakagawa M."/>
            <person name="Sakamoto N."/>
            <person name="Oishi K."/>
            <person name="Kohara Y."/>
            <person name="Kobayashi M."/>
            <person name="Toyoda A."/>
            <person name="Sakaki Y."/>
            <person name="Sakurai T."/>
            <person name="Iida K."/>
            <person name="Akiyama K."/>
            <person name="Satou M."/>
            <person name="Toyoda T."/>
            <person name="Konagaya A."/>
            <person name="Carninci P."/>
            <person name="Kawai J."/>
            <person name="Hayashizaki Y."/>
            <person name="Shinozaki K."/>
        </authorList>
    </citation>
    <scope>NUCLEOTIDE SEQUENCE [LARGE SCALE MRNA] OF 8-511</scope>
    <source>
        <strain>cv. Columbia</strain>
    </source>
</reference>
<reference key="5">
    <citation type="journal article" date="2000" name="Plant Mol. Biol.">
        <title>In Arabidopsis thaliana, 1% of the genome codes for a novel protein family unique to plants.</title>
        <authorList>
            <person name="Aubourg S."/>
            <person name="Boudet N."/>
            <person name="Kreis M."/>
            <person name="Lecharny A."/>
        </authorList>
    </citation>
    <scope>GENE FAMILY</scope>
</reference>
<reference key="6">
    <citation type="journal article" date="2004" name="Plant Cell">
        <title>Genome-wide analysis of Arabidopsis pentatricopeptide repeat proteins reveals their essential role in organelle biogenesis.</title>
        <authorList>
            <person name="Lurin C."/>
            <person name="Andres C."/>
            <person name="Aubourg S."/>
            <person name="Bellaoui M."/>
            <person name="Bitton F."/>
            <person name="Bruyere C."/>
            <person name="Caboche M."/>
            <person name="Debast C."/>
            <person name="Gualberto J."/>
            <person name="Hoffmann B."/>
            <person name="Lecharny A."/>
            <person name="Le Ret M."/>
            <person name="Martin-Magniette M.-L."/>
            <person name="Mireau H."/>
            <person name="Peeters N."/>
            <person name="Renou J.-P."/>
            <person name="Szurek B."/>
            <person name="Taconnat L."/>
            <person name="Small I."/>
        </authorList>
    </citation>
    <scope>GENE FAMILY</scope>
</reference>
<gene>
    <name type="primary">PCMP-E20</name>
    <name type="ordered locus">At5g08510</name>
    <name type="ORF">F8L15.21</name>
</gene>
<comment type="similarity">
    <text evidence="1">Belongs to the PPR family. PCMP-E subfamily.</text>
</comment>
<comment type="online information" name="Pentatricopeptide repeat proteins">
    <link uri="https://ppr.plantenergy.uwa.edu.au"/>
</comment>